<protein>
    <recommendedName>
        <fullName evidence="19">Lymphoid enhancer-binding factor 1</fullName>
        <shortName evidence="16">LEF-1</shortName>
    </recommendedName>
</protein>
<evidence type="ECO:0000250" key="1">
    <source>
        <dbReference type="UniProtKB" id="Q9UJU2"/>
    </source>
</evidence>
<evidence type="ECO:0000255" key="2">
    <source>
        <dbReference type="PROSITE-ProRule" id="PRU00267"/>
    </source>
</evidence>
<evidence type="ECO:0000256" key="3">
    <source>
        <dbReference type="SAM" id="MobiDB-lite"/>
    </source>
</evidence>
<evidence type="ECO:0000269" key="4">
    <source>
    </source>
</evidence>
<evidence type="ECO:0000269" key="5">
    <source>
    </source>
</evidence>
<evidence type="ECO:0000269" key="6">
    <source>
    </source>
</evidence>
<evidence type="ECO:0000269" key="7">
    <source>
    </source>
</evidence>
<evidence type="ECO:0000269" key="8">
    <source>
    </source>
</evidence>
<evidence type="ECO:0000269" key="9">
    <source>
    </source>
</evidence>
<evidence type="ECO:0000269" key="10">
    <source>
    </source>
</evidence>
<evidence type="ECO:0000269" key="11">
    <source>
    </source>
</evidence>
<evidence type="ECO:0000269" key="12">
    <source>
    </source>
</evidence>
<evidence type="ECO:0000269" key="13">
    <source>
    </source>
</evidence>
<evidence type="ECO:0000269" key="14">
    <source>
    </source>
</evidence>
<evidence type="ECO:0000269" key="15">
    <source>
    </source>
</evidence>
<evidence type="ECO:0000303" key="16">
    <source>
    </source>
</evidence>
<evidence type="ECO:0000303" key="17">
    <source>
    </source>
</evidence>
<evidence type="ECO:0000305" key="18"/>
<evidence type="ECO:0000312" key="19">
    <source>
        <dbReference type="MGI" id="MGI:96770"/>
    </source>
</evidence>
<evidence type="ECO:0007829" key="20">
    <source>
        <dbReference type="PDB" id="2LEF"/>
    </source>
</evidence>
<evidence type="ECO:0007829" key="21">
    <source>
        <dbReference type="PDB" id="3OUX"/>
    </source>
</evidence>
<organism>
    <name type="scientific">Mus musculus</name>
    <name type="common">Mouse</name>
    <dbReference type="NCBI Taxonomy" id="10090"/>
    <lineage>
        <taxon>Eukaryota</taxon>
        <taxon>Metazoa</taxon>
        <taxon>Chordata</taxon>
        <taxon>Craniata</taxon>
        <taxon>Vertebrata</taxon>
        <taxon>Euteleostomi</taxon>
        <taxon>Mammalia</taxon>
        <taxon>Eutheria</taxon>
        <taxon>Euarchontoglires</taxon>
        <taxon>Glires</taxon>
        <taxon>Rodentia</taxon>
        <taxon>Myomorpha</taxon>
        <taxon>Muroidea</taxon>
        <taxon>Muridae</taxon>
        <taxon>Murinae</taxon>
        <taxon>Mus</taxon>
        <taxon>Mus</taxon>
    </lineage>
</organism>
<dbReference type="EMBL" id="X58636">
    <property type="protein sequence ID" value="CAA41493.1"/>
    <property type="molecule type" value="mRNA"/>
</dbReference>
<dbReference type="EMBL" id="D16503">
    <property type="protein sequence ID" value="BAA03954.1"/>
    <property type="molecule type" value="mRNA"/>
</dbReference>
<dbReference type="CCDS" id="CCDS17842.1">
    <molecule id="P27782-1"/>
</dbReference>
<dbReference type="PIR" id="A39565">
    <property type="entry name" value="A39565"/>
</dbReference>
<dbReference type="RefSeq" id="NP_034833.2">
    <molecule id="P27782-1"/>
    <property type="nucleotide sequence ID" value="NM_010703.4"/>
</dbReference>
<dbReference type="PDB" id="2LEF">
    <property type="method" value="NMR"/>
    <property type="chains" value="A=296-380"/>
</dbReference>
<dbReference type="PDB" id="3OUW">
    <property type="method" value="X-ray"/>
    <property type="resolution" value="2.91 A"/>
    <property type="chains" value="B=1-63"/>
</dbReference>
<dbReference type="PDB" id="3OUX">
    <property type="method" value="X-ray"/>
    <property type="resolution" value="2.40 A"/>
    <property type="chains" value="B=1-63"/>
</dbReference>
<dbReference type="PDBsum" id="2LEF"/>
<dbReference type="PDBsum" id="3OUW"/>
<dbReference type="PDBsum" id="3OUX"/>
<dbReference type="BMRB" id="P27782"/>
<dbReference type="SMR" id="P27782"/>
<dbReference type="BioGRID" id="201137">
    <property type="interactions" value="17"/>
</dbReference>
<dbReference type="ComplexPortal" id="CPX-318">
    <property type="entry name" value="beta1-catenin - LEF1 complex"/>
</dbReference>
<dbReference type="CORUM" id="P27782"/>
<dbReference type="DIP" id="DIP-35132N"/>
<dbReference type="ELM" id="P27782"/>
<dbReference type="FunCoup" id="P27782">
    <property type="interactions" value="1508"/>
</dbReference>
<dbReference type="IntAct" id="P27782">
    <property type="interactions" value="9"/>
</dbReference>
<dbReference type="MINT" id="P27782"/>
<dbReference type="STRING" id="10090.ENSMUSP00000029611"/>
<dbReference type="GlyGen" id="P27782">
    <property type="glycosylation" value="1 site"/>
</dbReference>
<dbReference type="iPTMnet" id="P27782"/>
<dbReference type="PhosphoSitePlus" id="P27782"/>
<dbReference type="PaxDb" id="10090-ENSMUSP00000029611"/>
<dbReference type="PeptideAtlas" id="P27782"/>
<dbReference type="ProteomicsDB" id="290018">
    <molecule id="P27782-1"/>
</dbReference>
<dbReference type="ProteomicsDB" id="290019">
    <molecule id="P27782-2"/>
</dbReference>
<dbReference type="Antibodypedia" id="912">
    <property type="antibodies" value="842 antibodies from 45 providers"/>
</dbReference>
<dbReference type="DNASU" id="16842"/>
<dbReference type="Ensembl" id="ENSMUST00000029611.14">
    <molecule id="P27782-1"/>
    <property type="protein sequence ID" value="ENSMUSP00000029611.8"/>
    <property type="gene ID" value="ENSMUSG00000027985.15"/>
</dbReference>
<dbReference type="GeneID" id="16842"/>
<dbReference type="KEGG" id="mmu:16842"/>
<dbReference type="UCSC" id="uc008rjf.2">
    <molecule id="P27782-1"/>
    <property type="organism name" value="mouse"/>
</dbReference>
<dbReference type="AGR" id="MGI:96770"/>
<dbReference type="CTD" id="51176"/>
<dbReference type="MGI" id="MGI:96770">
    <property type="gene designation" value="Lef1"/>
</dbReference>
<dbReference type="VEuPathDB" id="HostDB:ENSMUSG00000027985"/>
<dbReference type="eggNOG" id="KOG3248">
    <property type="taxonomic scope" value="Eukaryota"/>
</dbReference>
<dbReference type="GeneTree" id="ENSGT00940000159660"/>
<dbReference type="InParanoid" id="P27782"/>
<dbReference type="OMA" id="NFSTCKA"/>
<dbReference type="OrthoDB" id="2307332at2759"/>
<dbReference type="PhylomeDB" id="P27782"/>
<dbReference type="TreeFam" id="TF318448"/>
<dbReference type="Reactome" id="R-MMU-201722">
    <property type="pathway name" value="Formation of the beta-catenin:TCF transactivating complex"/>
</dbReference>
<dbReference type="Reactome" id="R-MMU-3769402">
    <property type="pathway name" value="Deactivation of the beta-catenin transactivating complex"/>
</dbReference>
<dbReference type="Reactome" id="R-MMU-4086398">
    <property type="pathway name" value="Ca2+ pathway"/>
</dbReference>
<dbReference type="Reactome" id="R-MMU-4641265">
    <property type="pathway name" value="Repression of WNT target genes"/>
</dbReference>
<dbReference type="Reactome" id="R-MMU-8951430">
    <property type="pathway name" value="RUNX3 regulates WNT signaling"/>
</dbReference>
<dbReference type="Reactome" id="R-MMU-9825892">
    <property type="pathway name" value="Regulation of MITF-M-dependent genes involved in cell cycle and proliferation"/>
</dbReference>
<dbReference type="BioGRID-ORCS" id="16842">
    <property type="hits" value="3 hits in 83 CRISPR screens"/>
</dbReference>
<dbReference type="ChiTaRS" id="Lef1">
    <property type="organism name" value="mouse"/>
</dbReference>
<dbReference type="EvolutionaryTrace" id="P27782"/>
<dbReference type="PRO" id="PR:P27782"/>
<dbReference type="Proteomes" id="UP000000589">
    <property type="component" value="Chromosome 3"/>
</dbReference>
<dbReference type="RNAct" id="P27782">
    <property type="molecule type" value="protein"/>
</dbReference>
<dbReference type="Bgee" id="ENSMUSG00000027985">
    <property type="expression patterns" value="Expressed in embryonic post-anal tail and 246 other cell types or tissues"/>
</dbReference>
<dbReference type="ExpressionAtlas" id="P27782">
    <property type="expression patterns" value="baseline and differential"/>
</dbReference>
<dbReference type="GO" id="GO:1990907">
    <property type="term" value="C:beta-catenin-TCF complex"/>
    <property type="evidence" value="ECO:0000314"/>
    <property type="project" value="ParkinsonsUK-UCL"/>
</dbReference>
<dbReference type="GO" id="GO:0005737">
    <property type="term" value="C:cytoplasm"/>
    <property type="evidence" value="ECO:0000314"/>
    <property type="project" value="CAFA"/>
</dbReference>
<dbReference type="GO" id="GO:0005654">
    <property type="term" value="C:nucleoplasm"/>
    <property type="evidence" value="ECO:0000304"/>
    <property type="project" value="Reactome"/>
</dbReference>
<dbReference type="GO" id="GO:0005634">
    <property type="term" value="C:nucleus"/>
    <property type="evidence" value="ECO:0000314"/>
    <property type="project" value="UniProtKB"/>
</dbReference>
<dbReference type="GO" id="GO:0032993">
    <property type="term" value="C:protein-DNA complex"/>
    <property type="evidence" value="ECO:0007669"/>
    <property type="project" value="Ensembl"/>
</dbReference>
<dbReference type="GO" id="GO:0090575">
    <property type="term" value="C:RNA polymerase II transcription regulator complex"/>
    <property type="evidence" value="ECO:0000353"/>
    <property type="project" value="ComplexPortal"/>
</dbReference>
<dbReference type="GO" id="GO:0005667">
    <property type="term" value="C:transcription regulator complex"/>
    <property type="evidence" value="ECO:0000314"/>
    <property type="project" value="MGI"/>
</dbReference>
<dbReference type="GO" id="GO:0070016">
    <property type="term" value="F:armadillo repeat domain binding"/>
    <property type="evidence" value="ECO:0007669"/>
    <property type="project" value="Ensembl"/>
</dbReference>
<dbReference type="GO" id="GO:0008013">
    <property type="term" value="F:beta-catenin binding"/>
    <property type="evidence" value="ECO:0007669"/>
    <property type="project" value="Ensembl"/>
</dbReference>
<dbReference type="GO" id="GO:0070742">
    <property type="term" value="F:C2H2 zinc finger domain binding"/>
    <property type="evidence" value="ECO:0007669"/>
    <property type="project" value="Ensembl"/>
</dbReference>
<dbReference type="GO" id="GO:0003682">
    <property type="term" value="F:chromatin binding"/>
    <property type="evidence" value="ECO:0000314"/>
    <property type="project" value="MGI"/>
</dbReference>
<dbReference type="GO" id="GO:0000987">
    <property type="term" value="F:cis-regulatory region sequence-specific DNA binding"/>
    <property type="evidence" value="ECO:0000314"/>
    <property type="project" value="MGI"/>
</dbReference>
<dbReference type="GO" id="GO:0003677">
    <property type="term" value="F:DNA binding"/>
    <property type="evidence" value="ECO:0000314"/>
    <property type="project" value="UniProtKB"/>
</dbReference>
<dbReference type="GO" id="GO:0008301">
    <property type="term" value="F:DNA binding, bending"/>
    <property type="evidence" value="ECO:0000314"/>
    <property type="project" value="UniProtKB"/>
</dbReference>
<dbReference type="GO" id="GO:0001228">
    <property type="term" value="F:DNA-binding transcription activator activity, RNA polymerase II-specific"/>
    <property type="evidence" value="ECO:0000314"/>
    <property type="project" value="NTNU_SB"/>
</dbReference>
<dbReference type="GO" id="GO:0003700">
    <property type="term" value="F:DNA-binding transcription factor activity"/>
    <property type="evidence" value="ECO:0000314"/>
    <property type="project" value="MGI"/>
</dbReference>
<dbReference type="GO" id="GO:0000981">
    <property type="term" value="F:DNA-binding transcription factor activity, RNA polymerase II-specific"/>
    <property type="evidence" value="ECO:0000316"/>
    <property type="project" value="MGI"/>
</dbReference>
<dbReference type="GO" id="GO:0001227">
    <property type="term" value="F:DNA-binding transcription repressor activity, RNA polymerase II-specific"/>
    <property type="evidence" value="ECO:0000315"/>
    <property type="project" value="MGI"/>
</dbReference>
<dbReference type="GO" id="GO:0045295">
    <property type="term" value="F:gamma-catenin binding"/>
    <property type="evidence" value="ECO:0007669"/>
    <property type="project" value="Ensembl"/>
</dbReference>
<dbReference type="GO" id="GO:0042826">
    <property type="term" value="F:histone deacetylase binding"/>
    <property type="evidence" value="ECO:0007669"/>
    <property type="project" value="Ensembl"/>
</dbReference>
<dbReference type="GO" id="GO:0030331">
    <property type="term" value="F:nuclear estrogen receptor binding"/>
    <property type="evidence" value="ECO:0007669"/>
    <property type="project" value="Ensembl"/>
</dbReference>
<dbReference type="GO" id="GO:0003676">
    <property type="term" value="F:nucleic acid binding"/>
    <property type="evidence" value="ECO:0000269"/>
    <property type="project" value="DisProt"/>
</dbReference>
<dbReference type="GO" id="GO:0000978">
    <property type="term" value="F:RNA polymerase II cis-regulatory region sequence-specific DNA binding"/>
    <property type="evidence" value="ECO:0000314"/>
    <property type="project" value="NTNU_SB"/>
</dbReference>
<dbReference type="GO" id="GO:0043565">
    <property type="term" value="F:sequence-specific DNA binding"/>
    <property type="evidence" value="ECO:0000314"/>
    <property type="project" value="MGI"/>
</dbReference>
<dbReference type="GO" id="GO:0000976">
    <property type="term" value="F:transcription cis-regulatory region binding"/>
    <property type="evidence" value="ECO:0000314"/>
    <property type="project" value="MGI"/>
</dbReference>
<dbReference type="GO" id="GO:0001222">
    <property type="term" value="F:transcription corepressor binding"/>
    <property type="evidence" value="ECO:0007669"/>
    <property type="project" value="Ensembl"/>
</dbReference>
<dbReference type="GO" id="GO:0140416">
    <property type="term" value="F:transcription regulator inhibitor activity"/>
    <property type="evidence" value="ECO:0007669"/>
    <property type="project" value="Ensembl"/>
</dbReference>
<dbReference type="GO" id="GO:0046632">
    <property type="term" value="P:alpha-beta T cell differentiation"/>
    <property type="evidence" value="ECO:0000316"/>
    <property type="project" value="MGI"/>
</dbReference>
<dbReference type="GO" id="GO:0060033">
    <property type="term" value="P:anatomical structure regression"/>
    <property type="evidence" value="ECO:0000315"/>
    <property type="project" value="MGI"/>
</dbReference>
<dbReference type="GO" id="GO:1902262">
    <property type="term" value="P:apoptotic process involved in blood vessel morphogenesis"/>
    <property type="evidence" value="ECO:0000315"/>
    <property type="project" value="MGI"/>
</dbReference>
<dbReference type="GO" id="GO:0060561">
    <property type="term" value="P:apoptotic process involved in morphogenesis"/>
    <property type="evidence" value="ECO:0000315"/>
    <property type="project" value="MGI"/>
</dbReference>
<dbReference type="GO" id="GO:0042100">
    <property type="term" value="P:B cell proliferation"/>
    <property type="evidence" value="ECO:0000315"/>
    <property type="project" value="MGI"/>
</dbReference>
<dbReference type="GO" id="GO:0030509">
    <property type="term" value="P:BMP signaling pathway"/>
    <property type="evidence" value="ECO:0000314"/>
    <property type="project" value="MGI"/>
</dbReference>
<dbReference type="GO" id="GO:0001569">
    <property type="term" value="P:branching involved in blood vessel morphogenesis"/>
    <property type="evidence" value="ECO:0000315"/>
    <property type="project" value="MGI"/>
</dbReference>
<dbReference type="GO" id="GO:0060070">
    <property type="term" value="P:canonical Wnt signaling pathway"/>
    <property type="evidence" value="ECO:0000314"/>
    <property type="project" value="ComplexPortal"/>
</dbReference>
<dbReference type="GO" id="GO:0060326">
    <property type="term" value="P:cell chemotaxis"/>
    <property type="evidence" value="ECO:0007669"/>
    <property type="project" value="Ensembl"/>
</dbReference>
<dbReference type="GO" id="GO:0048468">
    <property type="term" value="P:cell development"/>
    <property type="evidence" value="ECO:0000316"/>
    <property type="project" value="MGI"/>
</dbReference>
<dbReference type="GO" id="GO:0071353">
    <property type="term" value="P:cellular response to interleukin-4"/>
    <property type="evidence" value="ECO:0007669"/>
    <property type="project" value="Ensembl"/>
</dbReference>
<dbReference type="GO" id="GO:0060710">
    <property type="term" value="P:chorio-allantoic fusion"/>
    <property type="evidence" value="ECO:0000316"/>
    <property type="project" value="MGI"/>
</dbReference>
<dbReference type="GO" id="GO:0021542">
    <property type="term" value="P:dentate gyrus development"/>
    <property type="evidence" value="ECO:0000315"/>
    <property type="project" value="MGI"/>
</dbReference>
<dbReference type="GO" id="GO:0030326">
    <property type="term" value="P:embryonic limb morphogenesis"/>
    <property type="evidence" value="ECO:0000316"/>
    <property type="project" value="MGI"/>
</dbReference>
<dbReference type="GO" id="GO:1904019">
    <property type="term" value="P:epithelial cell apoptotic process"/>
    <property type="evidence" value="ECO:0000315"/>
    <property type="project" value="MGI"/>
</dbReference>
<dbReference type="GO" id="GO:0001837">
    <property type="term" value="P:epithelial to mesenchymal transition"/>
    <property type="evidence" value="ECO:0000315"/>
    <property type="project" value="BHF-UCL"/>
</dbReference>
<dbReference type="GO" id="GO:0060325">
    <property type="term" value="P:face morphogenesis"/>
    <property type="evidence" value="ECO:0000316"/>
    <property type="project" value="MGI"/>
</dbReference>
<dbReference type="GO" id="GO:0021873">
    <property type="term" value="P:forebrain neuroblast division"/>
    <property type="evidence" value="ECO:0000316"/>
    <property type="project" value="MGI"/>
</dbReference>
<dbReference type="GO" id="GO:0021861">
    <property type="term" value="P:forebrain radial glial cell differentiation"/>
    <property type="evidence" value="ECO:0000316"/>
    <property type="project" value="MGI"/>
</dbReference>
<dbReference type="GO" id="GO:0021943">
    <property type="term" value="P:formation of radial glial scaffolds"/>
    <property type="evidence" value="ECO:0000316"/>
    <property type="project" value="MGI"/>
</dbReference>
<dbReference type="GO" id="GO:0021766">
    <property type="term" value="P:hippocampus development"/>
    <property type="evidence" value="ECO:0000315"/>
    <property type="project" value="MGI"/>
</dbReference>
<dbReference type="GO" id="GO:0030879">
    <property type="term" value="P:mammary gland development"/>
    <property type="evidence" value="ECO:0000315"/>
    <property type="project" value="MGI"/>
</dbReference>
<dbReference type="GO" id="GO:0071866">
    <property type="term" value="P:negative regulation of apoptotic process in bone marrow cell"/>
    <property type="evidence" value="ECO:0007669"/>
    <property type="project" value="Ensembl"/>
</dbReference>
<dbReference type="GO" id="GO:0045892">
    <property type="term" value="P:negative regulation of DNA-templated transcription"/>
    <property type="evidence" value="ECO:0000314"/>
    <property type="project" value="MGI"/>
</dbReference>
<dbReference type="GO" id="GO:0032696">
    <property type="term" value="P:negative regulation of interleukin-13 production"/>
    <property type="evidence" value="ECO:0007669"/>
    <property type="project" value="Ensembl"/>
</dbReference>
<dbReference type="GO" id="GO:0032713">
    <property type="term" value="P:negative regulation of interleukin-4 production"/>
    <property type="evidence" value="ECO:0007669"/>
    <property type="project" value="Ensembl"/>
</dbReference>
<dbReference type="GO" id="GO:0032714">
    <property type="term" value="P:negative regulation of interleukin-5 production"/>
    <property type="evidence" value="ECO:0007669"/>
    <property type="project" value="Ensembl"/>
</dbReference>
<dbReference type="GO" id="GO:0045843">
    <property type="term" value="P:negative regulation of striated muscle tissue development"/>
    <property type="evidence" value="ECO:0000314"/>
    <property type="project" value="MGI"/>
</dbReference>
<dbReference type="GO" id="GO:0000122">
    <property type="term" value="P:negative regulation of transcription by RNA polymerase II"/>
    <property type="evidence" value="ECO:0000314"/>
    <property type="project" value="MGI"/>
</dbReference>
<dbReference type="GO" id="GO:0030223">
    <property type="term" value="P:neutrophil differentiation"/>
    <property type="evidence" value="ECO:0007669"/>
    <property type="project" value="Ensembl"/>
</dbReference>
<dbReference type="GO" id="GO:0042475">
    <property type="term" value="P:odontogenesis of dentin-containing tooth"/>
    <property type="evidence" value="ECO:0000315"/>
    <property type="project" value="MGI"/>
</dbReference>
<dbReference type="GO" id="GO:0001649">
    <property type="term" value="P:osteoblast differentiation"/>
    <property type="evidence" value="ECO:0007669"/>
    <property type="project" value="Ensembl"/>
</dbReference>
<dbReference type="GO" id="GO:0048341">
    <property type="term" value="P:paraxial mesoderm formation"/>
    <property type="evidence" value="ECO:0000316"/>
    <property type="project" value="MGI"/>
</dbReference>
<dbReference type="GO" id="GO:0043923">
    <property type="term" value="P:positive regulation by host of viral transcription"/>
    <property type="evidence" value="ECO:0007669"/>
    <property type="project" value="Ensembl"/>
</dbReference>
<dbReference type="GO" id="GO:0045597">
    <property type="term" value="P:positive regulation of cell differentiation"/>
    <property type="evidence" value="ECO:0000303"/>
    <property type="project" value="ComplexPortal"/>
</dbReference>
<dbReference type="GO" id="GO:0030335">
    <property type="term" value="P:positive regulation of cell migration"/>
    <property type="evidence" value="ECO:0007669"/>
    <property type="project" value="Ensembl"/>
</dbReference>
<dbReference type="GO" id="GO:0071864">
    <property type="term" value="P:positive regulation of cell proliferation in bone marrow"/>
    <property type="evidence" value="ECO:0007669"/>
    <property type="project" value="Ensembl"/>
</dbReference>
<dbReference type="GO" id="GO:1902732">
    <property type="term" value="P:positive regulation of chondrocyte proliferation"/>
    <property type="evidence" value="ECO:0000315"/>
    <property type="project" value="MGI"/>
</dbReference>
<dbReference type="GO" id="GO:0045893">
    <property type="term" value="P:positive regulation of DNA-templated transcription"/>
    <property type="evidence" value="ECO:0000314"/>
    <property type="project" value="MGI"/>
</dbReference>
<dbReference type="GO" id="GO:0010718">
    <property type="term" value="P:positive regulation of epithelial to mesenchymal transition"/>
    <property type="evidence" value="ECO:0007669"/>
    <property type="project" value="Ensembl"/>
</dbReference>
<dbReference type="GO" id="GO:0045588">
    <property type="term" value="P:positive regulation of gamma-delta T cell differentiation"/>
    <property type="evidence" value="ECO:0000315"/>
    <property type="project" value="UniProtKB"/>
</dbReference>
<dbReference type="GO" id="GO:0010628">
    <property type="term" value="P:positive regulation of gene expression"/>
    <property type="evidence" value="ECO:0007669"/>
    <property type="project" value="Ensembl"/>
</dbReference>
<dbReference type="GO" id="GO:0030854">
    <property type="term" value="P:positive regulation of granulocyte differentiation"/>
    <property type="evidence" value="ECO:0007669"/>
    <property type="project" value="Ensembl"/>
</dbReference>
<dbReference type="GO" id="GO:1901331">
    <property type="term" value="P:positive regulation of odontoblast differentiation"/>
    <property type="evidence" value="ECO:0000315"/>
    <property type="project" value="UniProtKB"/>
</dbReference>
<dbReference type="GO" id="GO:0045944">
    <property type="term" value="P:positive regulation of transcription by RNA polymerase II"/>
    <property type="evidence" value="ECO:0000314"/>
    <property type="project" value="NTNU_SB"/>
</dbReference>
<dbReference type="GO" id="GO:0030177">
    <property type="term" value="P:positive regulation of Wnt signaling pathway"/>
    <property type="evidence" value="ECO:0000315"/>
    <property type="project" value="MGI"/>
</dbReference>
<dbReference type="GO" id="GO:0071168">
    <property type="term" value="P:protein localization to chromatin"/>
    <property type="evidence" value="ECO:0007669"/>
    <property type="project" value="Ensembl"/>
</dbReference>
<dbReference type="GO" id="GO:0022407">
    <property type="term" value="P:regulation of cell-cell adhesion"/>
    <property type="evidence" value="ECO:0000315"/>
    <property type="project" value="MGI"/>
</dbReference>
<dbReference type="GO" id="GO:0006355">
    <property type="term" value="P:regulation of DNA-templated transcription"/>
    <property type="evidence" value="ECO:0000315"/>
    <property type="project" value="UniProtKB"/>
</dbReference>
<dbReference type="GO" id="GO:0050767">
    <property type="term" value="P:regulation of neurogenesis"/>
    <property type="evidence" value="ECO:0000303"/>
    <property type="project" value="ComplexPortal"/>
</dbReference>
<dbReference type="GO" id="GO:0006357">
    <property type="term" value="P:regulation of transcription by RNA polymerase II"/>
    <property type="evidence" value="ECO:0000314"/>
    <property type="project" value="MGI"/>
</dbReference>
<dbReference type="GO" id="GO:0030111">
    <property type="term" value="P:regulation of Wnt signaling pathway"/>
    <property type="evidence" value="ECO:0000316"/>
    <property type="project" value="MGI"/>
</dbReference>
<dbReference type="GO" id="GO:0062009">
    <property type="term" value="P:secondary palate development"/>
    <property type="evidence" value="ECO:0000315"/>
    <property type="project" value="BHF-UCL"/>
</dbReference>
<dbReference type="GO" id="GO:0050909">
    <property type="term" value="P:sensory perception of taste"/>
    <property type="evidence" value="ECO:0000315"/>
    <property type="project" value="MGI"/>
</dbReference>
<dbReference type="GO" id="GO:0001756">
    <property type="term" value="P:somitogenesis"/>
    <property type="evidence" value="ECO:0000315"/>
    <property type="project" value="MGI"/>
</dbReference>
<dbReference type="GO" id="GO:0002040">
    <property type="term" value="P:sprouting angiogenesis"/>
    <property type="evidence" value="ECO:0000315"/>
    <property type="project" value="MGI"/>
</dbReference>
<dbReference type="GO" id="GO:0033153">
    <property type="term" value="P:T cell receptor V(D)J recombination"/>
    <property type="evidence" value="ECO:0000316"/>
    <property type="project" value="MGI"/>
</dbReference>
<dbReference type="GO" id="GO:0045063">
    <property type="term" value="P:T-helper 1 cell differentiation"/>
    <property type="evidence" value="ECO:0000314"/>
    <property type="project" value="UniProtKB"/>
</dbReference>
<dbReference type="GO" id="GO:0043586">
    <property type="term" value="P:tongue development"/>
    <property type="evidence" value="ECO:0000315"/>
    <property type="project" value="MGI"/>
</dbReference>
<dbReference type="GO" id="GO:0061153">
    <property type="term" value="P:trachea gland development"/>
    <property type="evidence" value="ECO:0000315"/>
    <property type="project" value="MGI"/>
</dbReference>
<dbReference type="GO" id="GO:0006366">
    <property type="term" value="P:transcription by RNA polymerase II"/>
    <property type="evidence" value="ECO:0000315"/>
    <property type="project" value="MGI"/>
</dbReference>
<dbReference type="GO" id="GO:0001944">
    <property type="term" value="P:vasculature development"/>
    <property type="evidence" value="ECO:0000315"/>
    <property type="project" value="MGI"/>
</dbReference>
<dbReference type="CDD" id="cd21996">
    <property type="entry name" value="HMG-box_TCF7-like"/>
    <property type="match status" value="1"/>
</dbReference>
<dbReference type="DisProt" id="DP00767"/>
<dbReference type="FunFam" id="4.10.900.10:FF:000004">
    <property type="entry name" value="lymphoid enhancer-binding factor 1 isoform X2"/>
    <property type="match status" value="1"/>
</dbReference>
<dbReference type="FunFam" id="1.10.30.10:FF:000001">
    <property type="entry name" value="transcription factor 7 isoform X2"/>
    <property type="match status" value="1"/>
</dbReference>
<dbReference type="Gene3D" id="1.10.30.10">
    <property type="entry name" value="High mobility group box domain"/>
    <property type="match status" value="1"/>
</dbReference>
<dbReference type="Gene3D" id="4.10.900.10">
    <property type="entry name" value="TCF3-CBD (Catenin binding domain)"/>
    <property type="match status" value="1"/>
</dbReference>
<dbReference type="IDEAL" id="IID50006"/>
<dbReference type="InterPro" id="IPR027397">
    <property type="entry name" value="Catenin-bd_sf"/>
</dbReference>
<dbReference type="InterPro" id="IPR013558">
    <property type="entry name" value="CTNNB1-bd_N"/>
</dbReference>
<dbReference type="InterPro" id="IPR009071">
    <property type="entry name" value="HMG_box_dom"/>
</dbReference>
<dbReference type="InterPro" id="IPR036910">
    <property type="entry name" value="HMG_box_dom_sf"/>
</dbReference>
<dbReference type="InterPro" id="IPR024940">
    <property type="entry name" value="TCF/LEF"/>
</dbReference>
<dbReference type="PANTHER" id="PTHR10373:SF11">
    <property type="entry name" value="LYMPHOID ENHANCER-BINDING FACTOR 1"/>
    <property type="match status" value="1"/>
</dbReference>
<dbReference type="PANTHER" id="PTHR10373">
    <property type="entry name" value="TRANSCRIPTION FACTOR 7 FAMILY MEMBER"/>
    <property type="match status" value="1"/>
</dbReference>
<dbReference type="Pfam" id="PF08347">
    <property type="entry name" value="CTNNB1_binding"/>
    <property type="match status" value="1"/>
</dbReference>
<dbReference type="Pfam" id="PF00505">
    <property type="entry name" value="HMG_box"/>
    <property type="match status" value="1"/>
</dbReference>
<dbReference type="SMART" id="SM00398">
    <property type="entry name" value="HMG"/>
    <property type="match status" value="1"/>
</dbReference>
<dbReference type="SUPFAM" id="SSF47095">
    <property type="entry name" value="HMG-box"/>
    <property type="match status" value="1"/>
</dbReference>
<dbReference type="PROSITE" id="PS50118">
    <property type="entry name" value="HMG_BOX_2"/>
    <property type="match status" value="1"/>
</dbReference>
<comment type="function">
    <text evidence="1 6 7 8 12 14">Transcription factor that binds DNA in a sequence-specific manner (By similarity). Participates in the Wnt signaling pathway (PubMed:11445543). Activates transcription of target genes in the presence of CTNNB1 and EP300 (PubMed:12446687). PIASG antagonizes both Wnt-dependent and Wnt-independent activation by LEF1 (PubMed:11731474). TLE1, TLE2, TLE3 and TLE4 repress transactivation mediated by LEF1 and CTNNB1 (By similarity). Regulates T-cell receptor alpha enhancer function (By similarity). Required for IL17A expressing gamma-delta T-cell maturation and development, via binding to regulator loci of BLK to modulate expression (PubMed:23562159). Acts as a positive regulator of odontoblast differentiation during mesenchymal tooth germ formation, expression is repressed during the bell stage by MSX1-mediated inhibition of CTNNB1 signaling (PubMed:29148101). May play a role in hair cell differentiation and follicle morphogenesis (PubMed:11445543).</text>
</comment>
<comment type="subunit">
    <text evidence="1 5 7 8 11">Binds the armadillo repeat of CTNNB1 and forms a stable complex. Binds TLE1, ALYREF/THOC4, MDFI and MDFIC (By similarity). Interacts with NLK (By similarity). Interacts with EP300 and PIASG. Interacts with DAZAP2 (PubMed:19304756).</text>
</comment>
<comment type="interaction">
    <interactant intactId="EBI-984464">
        <id>P27782</id>
    </interactant>
    <interactant intactId="EBI-397872">
        <id>Q02248</id>
        <label>Ctnnb1</label>
    </interactant>
    <organismsDiffer>false</organismsDiffer>
    <experiments>6</experiments>
</comment>
<comment type="interaction">
    <interactant intactId="EBI-984464">
        <id>P27782</id>
    </interactant>
    <interactant intactId="EBI-6910056">
        <id>P30681</id>
        <label>Hmgb2</label>
    </interactant>
    <organismsDiffer>false</organismsDiffer>
    <experiments>2</experiments>
</comment>
<comment type="interaction">
    <interactant intactId="EBI-984464">
        <id>P27782</id>
    </interactant>
    <interactant intactId="EBI-491549">
        <id>P35222</id>
        <label>CTNNB1</label>
    </interactant>
    <organismsDiffer>true</organismsDiffer>
    <experiments>2</experiments>
</comment>
<comment type="interaction">
    <interactant intactId="EBI-984464">
        <id>P27782</id>
    </interactant>
    <interactant intactId="EBI-8607681">
        <id>O75564</id>
        <label>JRK</label>
    </interactant>
    <organismsDiffer>true</organismsDiffer>
    <experiments>3</experiments>
</comment>
<comment type="subcellular location">
    <subcellularLocation>
        <location evidence="4">Nucleus</location>
    </subcellularLocation>
    <text>Found in nuclear bodies upon PIASG binding.</text>
</comment>
<comment type="alternative products">
    <event type="alternative splicing"/>
    <isoform>
        <id>P27782-1</id>
        <name>1</name>
        <sequence type="displayed"/>
    </isoform>
    <isoform>
        <id>P27782-2</id>
        <name>2</name>
        <name>LEF-1S</name>
        <sequence type="described" ref="VSP_006983"/>
    </isoform>
</comment>
<comment type="tissue specificity">
    <text evidence="4 9 10 12">Expressed in Vgamma1.1 and Vgamma2 gamma-delta T-cells, however not expressed in gamma-delta thymocytes fated for Il17a expression (at protein level) (PubMed:17218525, PubMed:23562159). Expressed in alpha-beta T-cell lineages (PubMed:17218525). Expressed in the thymus (PubMed:1827423). Found in distinct epithelial cell compartments of the skin and is abundant in the hair-producing progenitors of the follicle (PubMed:10498690).</text>
</comment>
<comment type="developmental stage">
    <text evidence="4 13 14 15">Expressed in the lower molar mesenchyme at 13.5 dpc and 14.5 dpc (PubMed:8898217). Expressed in the distal tooth bud epithelium and condensing tooth mesenchyme surrounding the tooth bud during the bud stage of mandibular molar tooth development at 13.5 dpc (PubMed:27713059). Expressed in bell stage dental mesenchymal cells at 17.5 dpc (at protein level) (PubMed:29148101). Detected throughout the basal layer, in ectodermal placodes and the underlying dermal condensates in embryonic skin, and in epithelium and mesenchyme from early hair germs at 16.5 dpc (at protein level) (PubMed:10498690). At birth expression decreases in the basal level of the epidermis and increases in hair bulbs, in particular in matrix and precortex (PubMed:10498690). At day 6-9 expression is concentrated in follicle bulbs and in the hair shaft in a concentric ring of hair-keratin-expressing cells derived from the precortex (PubMed:10498690). Detected in dermal papilla throughout the hair cycle, and in a subset of cells emanating from the bulge to form the secondary hair germ (PubMed:10498690).</text>
</comment>
<comment type="domain">
    <text>Proline-rich and acidic regions are implicated in the activation functions of RNA polymerase II transcription factors.</text>
</comment>
<comment type="PTM">
    <text evidence="1">Phosphorylated at Thr-153 and/or Ser-164 by NLK (By similarity). Phosphorylation by NLK at these sites represses LEF1-mediated transcriptional activation of target genes of the canonical Wnt signaling pathway (By similarity).</text>
</comment>
<comment type="similarity">
    <text evidence="18">Belongs to the TCF/LEF family.</text>
</comment>
<proteinExistence type="evidence at protein level"/>
<gene>
    <name evidence="19" type="primary">Lef1</name>
</gene>
<sequence>MPQLSGGGGGGDPELCATDEMIPFKDEGDPQKEKIFAEISHPEEEGDLADIKSSLVNESEIIPASNGHEVVRQAPSSQEPYHDKAREHPDEGKHPDGGLYNKGPSYSSYSGYIMMPNMNSDPYMSNGSLSPPIPRTSNKVPVVQPSHAVHPLTPLITYSDEHFSPGSHPSHIPSDVNSKQGMSRHPPAPEIPTFYPLSPGGVGQITPPIGWQGQPVYPITGGFRQPYPSSLSGDTSMSRFSHHMIPGPPGPHTTGIPHPAIVTPQVKQEHPHTDSDLMHVKPQHEQRKEQEPKRPHIKKPLNAFMLYMKEMRANVVAECTLKESAAINQILGRRWHALSREEQAKYYELARKERQLHMQLYPGWSARDNYGKKKKRKREKLQESTSGTGPRMTAAYI</sequence>
<accession>P27782</accession>
<name>LEF1_MOUSE</name>
<keyword id="KW-0002">3D-structure</keyword>
<keyword id="KW-0010">Activator</keyword>
<keyword id="KW-0025">Alternative splicing</keyword>
<keyword id="KW-0238">DNA-binding</keyword>
<keyword id="KW-1017">Isopeptide bond</keyword>
<keyword id="KW-0539">Nucleus</keyword>
<keyword id="KW-0597">Phosphoprotein</keyword>
<keyword id="KW-1185">Reference proteome</keyword>
<keyword id="KW-0804">Transcription</keyword>
<keyword id="KW-0805">Transcription regulation</keyword>
<keyword id="KW-0832">Ubl conjugation</keyword>
<keyword id="KW-0879">Wnt signaling pathway</keyword>
<reference key="1">
    <citation type="journal article" date="1991" name="Genes Dev.">
        <title>LEF-1, a gene encoding a lymphoid-specific protein with an HMG domain, regulates T-cell receptor alpha enhancer function.</title>
        <authorList>
            <person name="Travis A."/>
            <person name="Amsterdam A."/>
            <person name="Belanger C."/>
            <person name="Grosschedl R."/>
        </authorList>
    </citation>
    <scope>NUCLEOTIDE SEQUENCE [MRNA] (ISOFORM 1)</scope>
    <scope>TISSUE SPECIFICITY</scope>
    <source>
        <strain>C57BL/6 X DBA</strain>
    </source>
</reference>
<reference key="2">
    <citation type="journal article" date="1993" name="Nucleic Acids Res.">
        <title>Nucleotide sequence of a cDNA encoding an alternative form of LEF-1.</title>
        <authorList>
            <person name="Fujimoto S."/>
            <person name="Morita K."/>
            <person name="Kanaitsuka T."/>
            <person name="Germeraad W.T."/>
            <person name="Mazda O."/>
            <person name="Katsura Y."/>
        </authorList>
    </citation>
    <scope>NUCLEOTIDE SEQUENCE [MRNA] (ISOFORM 2)</scope>
    <source>
        <strain>C57BL/6J</strain>
    </source>
</reference>
<reference key="3">
    <citation type="journal article" date="1996" name="Development">
        <title>Msx1 controls inductive signaling in mammalian tooth morphogenesis.</title>
        <authorList>
            <person name="Chen Y."/>
            <person name="Bei M."/>
            <person name="Woo I."/>
            <person name="Satokata I."/>
            <person name="Maas R."/>
        </authorList>
    </citation>
    <scope>DEVELOPMENTAL STAGE</scope>
</reference>
<reference key="4">
    <citation type="journal article" date="1999" name="Development">
        <title>Multiple roles for activated LEF/TCF transcription complexes during hair follicle development and differentiation.</title>
        <authorList>
            <person name="DasGupta R."/>
            <person name="Fuchs E."/>
        </authorList>
    </citation>
    <scope>SUBCELLULAR LOCATION</scope>
    <scope>TISSUE SPECIFICITY</scope>
    <scope>DEVELOPMENTAL STAGE</scope>
</reference>
<reference key="5">
    <citation type="journal article" date="2000" name="Nat. Struct. Biol.">
        <title>Hot spots in beta-catenin for interactions with LEF-1, conductin and APC.</title>
        <authorList>
            <person name="von Kries J.P."/>
            <person name="Winbeck G."/>
            <person name="Asbrand C."/>
            <person name="Schwarz-Romond T."/>
            <person name="Sochnikova N."/>
            <person name="Dell'Oro A."/>
            <person name="Behrens J."/>
            <person name="Birchmeier W."/>
        </authorList>
    </citation>
    <scope>INTERACTION WITH CTNNB1</scope>
    <scope>MUTAGENESIS OF ASP-19; GLU-20; PHE-24; ASP-26 AND GLU-27</scope>
</reference>
<reference key="6">
    <citation type="journal article" date="2001" name="Genes Dev.">
        <title>Tcf3 and Lef1 regulate lineage differentiation of multipotent stem cells in skin.</title>
        <authorList>
            <person name="Merrill B.J."/>
            <person name="Gat U."/>
            <person name="DasGupta R."/>
            <person name="Fuchs E."/>
        </authorList>
    </citation>
    <scope>FUNCTION IN HAIR DEVELOPMENT</scope>
</reference>
<reference key="7">
    <citation type="journal article" date="2001" name="Genes Dev.">
        <title>PIASy, a nuclear matrix-associated SUMO E3 ligase, represses LEF1 activity by sequestration into nuclear bodies.</title>
        <authorList>
            <person name="Sachdev S."/>
            <person name="Bruhn L."/>
            <person name="Sieber H."/>
            <person name="Pichler A."/>
            <person name="Melchior F."/>
            <person name="Grosschedl R."/>
        </authorList>
    </citation>
    <scope>FUNCTION</scope>
    <scope>INTERACTION WITH PIASG</scope>
    <scope>LOCATION IN NUCLEAR BODIES</scope>
    <scope>SUMOYLATION</scope>
</reference>
<reference key="8">
    <citation type="journal article" date="2003" name="J. Biol. Chem.">
        <title>Identification of a promoter-specific transcriptional activation domain at the C-terminus of the Wnt effector protein T-cell factor 4.</title>
        <authorList>
            <person name="Hecht A."/>
            <person name="Stemmler M.P."/>
        </authorList>
    </citation>
    <scope>FUNCTION</scope>
    <scope>INTERACTION WITH EP300</scope>
</reference>
<reference key="9">
    <citation type="journal article" date="2007" name="Science">
        <title>Regulation of gammadelta versus alphabeta T lymphocyte differentiation by the transcription factor SOX13.</title>
        <authorList>
            <person name="Melichar H.J."/>
            <person name="Narayan K."/>
            <person name="Der S.D."/>
            <person name="Hiraoka Y."/>
            <person name="Gardiol N."/>
            <person name="Jeannet G."/>
            <person name="Held W."/>
            <person name="Chambers C.A."/>
            <person name="Kang J."/>
        </authorList>
    </citation>
    <scope>TISSUE SPECIFICITY</scope>
</reference>
<reference key="10">
    <citation type="journal article" date="2009" name="Nucleic Acids Res.">
        <title>Dazap2 modulates transcription driven by the Wnt effector TCF-4.</title>
        <authorList>
            <person name="Lukas J."/>
            <person name="Mazna P."/>
            <person name="Valenta T."/>
            <person name="Doubravska L."/>
            <person name="Pospichalova V."/>
            <person name="Vojtechova M."/>
            <person name="Fafilek B."/>
            <person name="Ivanek R."/>
            <person name="Plachy J."/>
            <person name="Novak J."/>
            <person name="Korinek V."/>
        </authorList>
    </citation>
    <scope>INTERACTION WITH DAZAP2</scope>
</reference>
<reference key="11">
    <citation type="journal article" date="2013" name="Immunity">
        <title>A network of high-mobility group box transcription factors programs innate interleukin-17 production.</title>
        <authorList>
            <consortium name="Immunological Genome Project Consortium"/>
            <person name="Malhotra N."/>
            <person name="Narayan K."/>
            <person name="Cho O.H."/>
            <person name="Sylvia K.E."/>
            <person name="Yin C."/>
            <person name="Melichar H."/>
            <person name="Rashighi M."/>
            <person name="Lefebvre V."/>
            <person name="Harris J.E."/>
            <person name="Berg L.J."/>
            <person name="Kang J."/>
        </authorList>
    </citation>
    <scope>FUNCTION</scope>
    <scope>TISSUE SPECIFICITY</scope>
</reference>
<reference key="12">
    <citation type="journal article" date="2016" name="Dev. Biol.">
        <title>Bmp4-Msx1 signaling and Osr2 control tooth organogenesis through antagonistic regulation of secreted Wnt antagonists.</title>
        <authorList>
            <person name="Jia S."/>
            <person name="Kwon H.E."/>
            <person name="Lan Y."/>
            <person name="Zhou J."/>
            <person name="Liu H."/>
            <person name="Jiang R."/>
        </authorList>
    </citation>
    <scope>DEVELOPMENTAL STAGE</scope>
</reference>
<reference key="13">
    <citation type="journal article" date="2018" name="Eur. J. Oral Sci.">
        <title>Homeobox protein MSX-1 inhibits expression of bone morphogenetic protein 2, bone morphogenetic protein 4, and lymphoid enhancer-binding factor 1 via Wnt/beta-catenin signaling to prevent differentiation of dental mesenchymal cells during the late bell stage.</title>
        <authorList>
            <person name="Feng X.Y."/>
            <person name="Wu X.S."/>
            <person name="Wang J.S."/>
            <person name="Zhang C.M."/>
            <person name="Wang S.L."/>
        </authorList>
    </citation>
    <scope>FUNCTION</scope>
    <scope>DEVELOPMENTAL STAGE</scope>
</reference>
<reference key="14">
    <citation type="journal article" date="1995" name="Nature">
        <title>Structural basis for DNA bending by the architectural transcription factor LEF-1.</title>
        <authorList>
            <person name="Love J.J."/>
            <person name="Li X."/>
            <person name="Case D.A."/>
            <person name="Glese K."/>
            <person name="Grosschedl P."/>
            <person name="Wright P.E."/>
        </authorList>
    </citation>
    <scope>STRUCTURE BY NMR OF 296-380</scope>
</reference>
<reference key="15">
    <citation type="submission" date="1998-10" db="PDB data bank">
        <title>High resolution NMR structure of the LEF-1 HMG domain complexed with its cognate DNA.</title>
        <authorList>
            <person name="Li X."/>
            <person name="Love J.J."/>
            <person name="Case D.A."/>
            <person name="Wright P.E."/>
        </authorList>
    </citation>
    <scope>STRUCTURE BY NMR OF 296-380</scope>
</reference>
<feature type="chain" id="PRO_0000048596" description="Lymphoid enhancer-binding factor 1">
    <location>
        <begin position="1"/>
        <end position="397"/>
    </location>
</feature>
<feature type="DNA-binding region" description="HMG box" evidence="2">
    <location>
        <begin position="297"/>
        <end position="365"/>
    </location>
</feature>
<feature type="region of interest" description="CTNNB1-binding">
    <location>
        <begin position="1"/>
        <end position="60"/>
    </location>
</feature>
<feature type="region of interest" description="Disordered" evidence="3">
    <location>
        <begin position="59"/>
        <end position="102"/>
    </location>
</feature>
<feature type="region of interest" description="Disordered" evidence="3">
    <location>
        <begin position="164"/>
        <end position="191"/>
    </location>
</feature>
<feature type="region of interest" description="Disordered" evidence="3">
    <location>
        <begin position="266"/>
        <end position="296"/>
    </location>
</feature>
<feature type="region of interest" description="Disordered" evidence="3">
    <location>
        <begin position="367"/>
        <end position="397"/>
    </location>
</feature>
<feature type="compositionally biased region" description="Basic and acidic residues" evidence="3">
    <location>
        <begin position="80"/>
        <end position="96"/>
    </location>
</feature>
<feature type="compositionally biased region" description="Basic and acidic residues" evidence="3">
    <location>
        <begin position="267"/>
        <end position="294"/>
    </location>
</feature>
<feature type="modified residue" description="Phosphoserine" evidence="1">
    <location>
        <position position="130"/>
    </location>
</feature>
<feature type="modified residue" description="Phosphothreonine; by NLK" evidence="1">
    <location>
        <position position="153"/>
    </location>
</feature>
<feature type="modified residue" description="Phosphoserine; by NLK" evidence="1">
    <location>
        <position position="164"/>
    </location>
</feature>
<feature type="cross-link" description="Glycyl lysine isopeptide (Lys-Gly) (interchain with G-Cter in SUMO)">
    <location>
        <position position="25"/>
    </location>
</feature>
<feature type="cross-link" description="Glycyl lysine isopeptide (Lys-Gly) (interchain with G-Cter in SUMO)">
    <location>
        <position position="267"/>
    </location>
</feature>
<feature type="splice variant" id="VSP_006983" description="In isoform 2." evidence="17">
    <location>
        <begin position="1"/>
        <end position="113"/>
    </location>
</feature>
<feature type="mutagenesis site" description="Strongly diminishes CTNNB1 binding and transactivation. Prevents nuclear translocation of CTNNB1." evidence="5">
    <original>D</original>
    <variation>A</variation>
    <location>
        <position position="19"/>
    </location>
</feature>
<feature type="mutagenesis site" description="Prevents nuclear translocation of CTNNB1." evidence="5">
    <original>E</original>
    <variation>A</variation>
    <location>
        <position position="20"/>
    </location>
</feature>
<feature type="mutagenesis site" description="Strongly diminishes CTNNB1 binding and transactivation. Prevents nuclear translocation of CTNNB1." evidence="5">
    <original>F</original>
    <variation>A</variation>
    <location>
        <position position="24"/>
    </location>
</feature>
<feature type="mutagenesis site" description="Prevents nuclear translocation of CTNNB1." evidence="5">
    <original>D</original>
    <variation>A</variation>
    <location>
        <position position="26"/>
    </location>
</feature>
<feature type="mutagenesis site" description="Prevents nuclear translocation of CTNNB1." evidence="5">
    <original>E</original>
    <variation>A</variation>
    <location>
        <position position="27"/>
    </location>
</feature>
<feature type="turn" evidence="21">
    <location>
        <begin position="13"/>
        <end position="16"/>
    </location>
</feature>
<feature type="strand" evidence="21">
    <location>
        <begin position="32"/>
        <end position="34"/>
    </location>
</feature>
<feature type="helix" evidence="21">
    <location>
        <begin position="48"/>
        <end position="58"/>
    </location>
</feature>
<feature type="helix" evidence="20">
    <location>
        <begin position="303"/>
        <end position="318"/>
    </location>
</feature>
<feature type="helix" evidence="20">
    <location>
        <begin position="324"/>
        <end position="335"/>
    </location>
</feature>
<feature type="helix" evidence="20">
    <location>
        <begin position="340"/>
        <end position="360"/>
    </location>
</feature>
<feature type="turn" evidence="20">
    <location>
        <begin position="370"/>
        <end position="372"/>
    </location>
</feature>